<evidence type="ECO:0000269" key="1">
    <source>
    </source>
</evidence>
<evidence type="ECO:0000303" key="2">
    <source>
    </source>
</evidence>
<evidence type="ECO:0000305" key="3">
    <source>
    </source>
</evidence>
<reference key="1">
    <citation type="journal article" date="2010" name="J. Bacteriol.">
        <title>The genetic basis of laboratory adaptation in Caulobacter crescentus.</title>
        <authorList>
            <person name="Marks M.E."/>
            <person name="Castro-Rojas C.M."/>
            <person name="Teiling C."/>
            <person name="Du L."/>
            <person name="Kapatral V."/>
            <person name="Walunas T.L."/>
            <person name="Crosson S."/>
        </authorList>
    </citation>
    <scope>NUCLEOTIDE SEQUENCE [LARGE SCALE GENOMIC DNA]</scope>
    <source>
        <strain>NA1000 / CB15N</strain>
    </source>
</reference>
<reference key="2">
    <citation type="journal article" date="2013" name="Mol. Cell">
        <title>A bacterial toxin inhibits DNA replication elongation through a direct interaction with the beta sliding clamp.</title>
        <authorList>
            <person name="Aakre C.D."/>
            <person name="Phung T.N."/>
            <person name="Huang D."/>
            <person name="Laub M.T."/>
        </authorList>
    </citation>
    <scope>FUNCTION AS A TOXIN</scope>
    <scope>INTERACTION WITH SOCA AND DNAN</scope>
    <scope>SUBCELLULAR LOCATION</scope>
    <scope>INDUCTION</scope>
    <scope>DEGRADATION</scope>
    <scope>DISRUPTION PHENOTYPE</scope>
    <scope>MUTAGENESIS OF GLN-52</scope>
</reference>
<name>SOCB_CAUVN</name>
<sequence length="237" mass="27111">MKKHRLPDTELARIAPLAPDARRKALLKFKNGFPDFSYEPTRRRLPELTNAQPSLLSLGDTEWSKIESGLKRLKNEKEAASNIEVAELLYNFIREEKYIAVMEPFGKLQLGAGVAISYWSDAIFFGPDGPTIFGFDFRRAGGFNDSARRFAFSAQHEHIRQRGDDYATAKLGLVQFPALRNGTRKVRVEFADQVELIPYDELIQMARETYSVWFEILEQREDEARKTGTGGSWWDGD</sequence>
<feature type="chain" id="PRO_0000441113" description="DNA replication inhibitor toxin SocB">
    <location>
        <begin position="1"/>
        <end position="237"/>
    </location>
</feature>
<feature type="mutagenesis site" description="Tagged overexpressed SocB is not longer toxic, no longer makes foci during DNA replication and no longer interacts with beta sliding clamp (dnaA). Protein still interacts with SocA." evidence="1">
    <original>Q</original>
    <variation>A</variation>
    <location>
        <position position="52"/>
    </location>
</feature>
<dbReference type="EMBL" id="CP001340">
    <property type="protein sequence ID" value="ACL97094.1"/>
    <property type="molecule type" value="Genomic_DNA"/>
</dbReference>
<dbReference type="RefSeq" id="WP_015923298.1">
    <property type="nucleotide sequence ID" value="NC_011916.1"/>
</dbReference>
<dbReference type="RefSeq" id="YP_002519002.1">
    <property type="nucleotide sequence ID" value="NC_011916.1"/>
</dbReference>
<dbReference type="GeneID" id="7329714"/>
<dbReference type="KEGG" id="ccs:CCNA_03629"/>
<dbReference type="PATRIC" id="fig|565050.3.peg.3543"/>
<dbReference type="HOGENOM" id="CLU_079290_0_0_5"/>
<dbReference type="OrthoDB" id="7828352at2"/>
<dbReference type="Proteomes" id="UP000001364">
    <property type="component" value="Chromosome"/>
</dbReference>
<dbReference type="GO" id="GO:0005737">
    <property type="term" value="C:cytoplasm"/>
    <property type="evidence" value="ECO:0007669"/>
    <property type="project" value="UniProtKB-SubCell"/>
</dbReference>
<dbReference type="NCBIfam" id="NF047746">
    <property type="entry name" value="SocB_toxin"/>
    <property type="match status" value="1"/>
</dbReference>
<gene>
    <name evidence="2" type="primary">socB</name>
    <name type="ordered locus">CCNA_03629</name>
</gene>
<comment type="function">
    <text evidence="1">Toxic component of an atypical type II toxin-antitoxin (TA) system. Upon overexpression in the absence of its cognate antitoxin SocA, leads to inhibition of colony formation, cellular filamentation, incomplete DNA replication and induction of the SOS response. Exercises toxicity by binding the beta sliding clamp (dnaN), blocking DNA replication and leading to premature replication fork collapse and incomplete cell division. Unlike most type II TA systems, the SocB toxin is unstable and targeted by its cognate antitoxin SocA for degradation by ClpXP. Not toxic upon expression in E.coli.</text>
</comment>
<comment type="subunit">
    <text evidence="1">Interacts with cognate antitoxin SocA and with beta sliding clamp (dnaN).</text>
</comment>
<comment type="subcellular location">
    <subcellularLocation>
        <location evidence="3">Cytoplasm</location>
    </subcellularLocation>
    <text evidence="1">A tagged overexpressed form of SocB forms a discrete locus during DNA replication which co-localizes with beta sliding clamps (dnaN), but the locus disperses early. Loci formation depends on DnaA, the replication initiator protein (PubMed:24239291).</text>
</comment>
<comment type="induction">
    <text evidence="1">Induced by DNA damaging agent mitomycin C, part of the socA-socB operon.</text>
</comment>
<comment type="PTM">
    <text evidence="1">Degraded by ClpXP, recognition of SocB by ClpX requires SocA.</text>
</comment>
<comment type="disruption phenotype">
    <text evidence="1">Deletion of this gene allows growth of cells disrupted for clpP or clpX, deletions which are otherwise lethal.</text>
</comment>
<protein>
    <recommendedName>
        <fullName evidence="2">DNA replication inhibitor toxin SocB</fullName>
    </recommendedName>
</protein>
<proteinExistence type="evidence at protein level"/>
<keyword id="KW-0963">Cytoplasm</keyword>
<keyword id="KW-1185">Reference proteome</keyword>
<keyword id="KW-1277">Toxin-antitoxin system</keyword>
<accession>A0A0H3CC30</accession>
<organism>
    <name type="scientific">Caulobacter vibrioides (strain NA1000 / CB15N)</name>
    <name type="common">Caulobacter crescentus</name>
    <dbReference type="NCBI Taxonomy" id="565050"/>
    <lineage>
        <taxon>Bacteria</taxon>
        <taxon>Pseudomonadati</taxon>
        <taxon>Pseudomonadota</taxon>
        <taxon>Alphaproteobacteria</taxon>
        <taxon>Caulobacterales</taxon>
        <taxon>Caulobacteraceae</taxon>
        <taxon>Caulobacter</taxon>
    </lineage>
</organism>